<protein>
    <recommendedName>
        <fullName evidence="1">Isoleucine--tRNA ligase</fullName>
        <ecNumber evidence="1">6.1.1.5</ecNumber>
    </recommendedName>
    <alternativeName>
        <fullName evidence="1">Isoleucyl-tRNA synthetase</fullName>
        <shortName evidence="1">IleRS</shortName>
    </alternativeName>
</protein>
<organism>
    <name type="scientific">Yersinia enterocolitica serotype O:8 / biotype 1B (strain NCTC 13174 / 8081)</name>
    <dbReference type="NCBI Taxonomy" id="393305"/>
    <lineage>
        <taxon>Bacteria</taxon>
        <taxon>Pseudomonadati</taxon>
        <taxon>Pseudomonadota</taxon>
        <taxon>Gammaproteobacteria</taxon>
        <taxon>Enterobacterales</taxon>
        <taxon>Yersiniaceae</taxon>
        <taxon>Yersinia</taxon>
    </lineage>
</organism>
<gene>
    <name evidence="1" type="primary">ileS</name>
    <name type="ordered locus">YE0616</name>
</gene>
<accession>A1JJE1</accession>
<name>SYI_YERE8</name>
<dbReference type="EC" id="6.1.1.5" evidence="1"/>
<dbReference type="EMBL" id="AM286415">
    <property type="protein sequence ID" value="CAL10729.1"/>
    <property type="molecule type" value="Genomic_DNA"/>
</dbReference>
<dbReference type="RefSeq" id="WP_011815539.1">
    <property type="nucleotide sequence ID" value="NC_008800.1"/>
</dbReference>
<dbReference type="RefSeq" id="YP_001004969.1">
    <property type="nucleotide sequence ID" value="NC_008800.1"/>
</dbReference>
<dbReference type="SMR" id="A1JJE1"/>
<dbReference type="KEGG" id="yen:YE0616"/>
<dbReference type="PATRIC" id="fig|393305.7.peg.710"/>
<dbReference type="eggNOG" id="COG0060">
    <property type="taxonomic scope" value="Bacteria"/>
</dbReference>
<dbReference type="HOGENOM" id="CLU_001493_7_1_6"/>
<dbReference type="OrthoDB" id="9810365at2"/>
<dbReference type="Proteomes" id="UP000000642">
    <property type="component" value="Chromosome"/>
</dbReference>
<dbReference type="GO" id="GO:0005829">
    <property type="term" value="C:cytosol"/>
    <property type="evidence" value="ECO:0007669"/>
    <property type="project" value="TreeGrafter"/>
</dbReference>
<dbReference type="GO" id="GO:0002161">
    <property type="term" value="F:aminoacyl-tRNA deacylase activity"/>
    <property type="evidence" value="ECO:0007669"/>
    <property type="project" value="InterPro"/>
</dbReference>
<dbReference type="GO" id="GO:0005524">
    <property type="term" value="F:ATP binding"/>
    <property type="evidence" value="ECO:0007669"/>
    <property type="project" value="UniProtKB-UniRule"/>
</dbReference>
<dbReference type="GO" id="GO:0004822">
    <property type="term" value="F:isoleucine-tRNA ligase activity"/>
    <property type="evidence" value="ECO:0007669"/>
    <property type="project" value="UniProtKB-UniRule"/>
</dbReference>
<dbReference type="GO" id="GO:0000049">
    <property type="term" value="F:tRNA binding"/>
    <property type="evidence" value="ECO:0007669"/>
    <property type="project" value="InterPro"/>
</dbReference>
<dbReference type="GO" id="GO:0008270">
    <property type="term" value="F:zinc ion binding"/>
    <property type="evidence" value="ECO:0007669"/>
    <property type="project" value="UniProtKB-UniRule"/>
</dbReference>
<dbReference type="GO" id="GO:0006428">
    <property type="term" value="P:isoleucyl-tRNA aminoacylation"/>
    <property type="evidence" value="ECO:0007669"/>
    <property type="project" value="UniProtKB-UniRule"/>
</dbReference>
<dbReference type="CDD" id="cd07960">
    <property type="entry name" value="Anticodon_Ia_Ile_BEm"/>
    <property type="match status" value="1"/>
</dbReference>
<dbReference type="CDD" id="cd00818">
    <property type="entry name" value="IleRS_core"/>
    <property type="match status" value="1"/>
</dbReference>
<dbReference type="FunFam" id="1.10.730.20:FF:000001">
    <property type="entry name" value="Isoleucine--tRNA ligase"/>
    <property type="match status" value="1"/>
</dbReference>
<dbReference type="FunFam" id="3.40.50.620:FF:000042">
    <property type="entry name" value="Isoleucine--tRNA ligase"/>
    <property type="match status" value="1"/>
</dbReference>
<dbReference type="FunFam" id="3.40.50.620:FF:000048">
    <property type="entry name" value="Isoleucine--tRNA ligase"/>
    <property type="match status" value="1"/>
</dbReference>
<dbReference type="FunFam" id="3.90.740.10:FF:000002">
    <property type="entry name" value="Isoleucine--tRNA ligase"/>
    <property type="match status" value="1"/>
</dbReference>
<dbReference type="Gene3D" id="1.10.730.20">
    <property type="match status" value="1"/>
</dbReference>
<dbReference type="Gene3D" id="3.40.50.620">
    <property type="entry name" value="HUPs"/>
    <property type="match status" value="2"/>
</dbReference>
<dbReference type="Gene3D" id="3.90.740.10">
    <property type="entry name" value="Valyl/Leucyl/Isoleucyl-tRNA synthetase, editing domain"/>
    <property type="match status" value="1"/>
</dbReference>
<dbReference type="HAMAP" id="MF_02002">
    <property type="entry name" value="Ile_tRNA_synth_type1"/>
    <property type="match status" value="1"/>
</dbReference>
<dbReference type="InterPro" id="IPR001412">
    <property type="entry name" value="aa-tRNA-synth_I_CS"/>
</dbReference>
<dbReference type="InterPro" id="IPR002300">
    <property type="entry name" value="aa-tRNA-synth_Ia"/>
</dbReference>
<dbReference type="InterPro" id="IPR033708">
    <property type="entry name" value="Anticodon_Ile_BEm"/>
</dbReference>
<dbReference type="InterPro" id="IPR002301">
    <property type="entry name" value="Ile-tRNA-ligase"/>
</dbReference>
<dbReference type="InterPro" id="IPR023585">
    <property type="entry name" value="Ile-tRNA-ligase_type1"/>
</dbReference>
<dbReference type="InterPro" id="IPR050081">
    <property type="entry name" value="Ile-tRNA_ligase"/>
</dbReference>
<dbReference type="InterPro" id="IPR013155">
    <property type="entry name" value="M/V/L/I-tRNA-synth_anticd-bd"/>
</dbReference>
<dbReference type="InterPro" id="IPR014729">
    <property type="entry name" value="Rossmann-like_a/b/a_fold"/>
</dbReference>
<dbReference type="InterPro" id="IPR009080">
    <property type="entry name" value="tRNAsynth_Ia_anticodon-bd"/>
</dbReference>
<dbReference type="InterPro" id="IPR009008">
    <property type="entry name" value="Val/Leu/Ile-tRNA-synth_edit"/>
</dbReference>
<dbReference type="InterPro" id="IPR010663">
    <property type="entry name" value="Znf_FPG/IleRS"/>
</dbReference>
<dbReference type="NCBIfam" id="TIGR00392">
    <property type="entry name" value="ileS"/>
    <property type="match status" value="1"/>
</dbReference>
<dbReference type="PANTHER" id="PTHR42765:SF1">
    <property type="entry name" value="ISOLEUCINE--TRNA LIGASE, MITOCHONDRIAL"/>
    <property type="match status" value="1"/>
</dbReference>
<dbReference type="PANTHER" id="PTHR42765">
    <property type="entry name" value="SOLEUCYL-TRNA SYNTHETASE"/>
    <property type="match status" value="1"/>
</dbReference>
<dbReference type="Pfam" id="PF08264">
    <property type="entry name" value="Anticodon_1"/>
    <property type="match status" value="1"/>
</dbReference>
<dbReference type="Pfam" id="PF00133">
    <property type="entry name" value="tRNA-synt_1"/>
    <property type="match status" value="1"/>
</dbReference>
<dbReference type="Pfam" id="PF06827">
    <property type="entry name" value="zf-FPG_IleRS"/>
    <property type="match status" value="1"/>
</dbReference>
<dbReference type="PRINTS" id="PR00984">
    <property type="entry name" value="TRNASYNTHILE"/>
</dbReference>
<dbReference type="SUPFAM" id="SSF47323">
    <property type="entry name" value="Anticodon-binding domain of a subclass of class I aminoacyl-tRNA synthetases"/>
    <property type="match status" value="1"/>
</dbReference>
<dbReference type="SUPFAM" id="SSF52374">
    <property type="entry name" value="Nucleotidylyl transferase"/>
    <property type="match status" value="1"/>
</dbReference>
<dbReference type="SUPFAM" id="SSF50677">
    <property type="entry name" value="ValRS/IleRS/LeuRS editing domain"/>
    <property type="match status" value="1"/>
</dbReference>
<dbReference type="PROSITE" id="PS00178">
    <property type="entry name" value="AA_TRNA_LIGASE_I"/>
    <property type="match status" value="1"/>
</dbReference>
<sequence>MSDYKNTLNLPETGFPMRGDLAKREPDMLKRWYEQDLYGIIRTAKKGKKTFILHDGPPYANGNIHIGHSVNKILKDIIVKAKGMSGYDSPYIPGWDCHGLPIELKVEQLIGKPGEKVSAAEFRAACRKYAAEQVEGQKKDFIRLGVLGDWDHPYLTMDFKTEANIIRALSKIIDNAHLHKGAKPVHWCTDCGSSLAEAEVEYYDKTSPSIDVRFNAVDVATVSAKFGAANANGPISLVIWTTTPWTLPANRAISLNAEYNYQLVQVEGECLILAEDLVESVMKRAGIAEWTVLGSCKGSDLELLRFNHPFMGFDVPAILGDHVTLDAGTGAVHTAPGHGPDDFVIGQKYGLEVANPVGPNGCYLAGTYPTLDGLFVFKANDVIVELLREKGALLKVEKLVHSYPCCWRHKTPIIFRATPQWFISMDQKGLRKQSLEEIKGVQWIPDWGQARIETMVANRPDWCISRQRTWGVPMSLFVHKETEALHPRSTELMEEVAKRVEQDGIQAWWDLDPAEILGADAADYVKVPDTLDVWFDSGSTHSSVVDARPEFGGHSPDMYLEGSDQHRGWFMSSLMIATAMKGKAPYRQVLTHGFTVDGQGRKMSKSIGNTISPQDVMNKLGGDILRLWVASTDYTGEIAVSDEILKRSADSYRRIRNTARFLLANLNGFDPALHQVKPEEMVVVDRWAVGRAQAAQAEIMEAYENYDFHLVVQRLMQFCSVEMGSFYLDIIKDRQYTAKGDSVARRSCQTALFHIAEALVRWMAPIMSFTADEIWNEMPGERPQYVFTEEWYDGLFGLAGDESMNDTFWAELLKVRGEVNKVLEQARSDKRIGGSLEAAVTLFATPELAARLNSLQDELRFVLLTSAAKVADYADAGDDALQSELISGLKITFNKADGEKCPRCWHYTQDIGLVAEHAELCGRCVTNVAGDGEERKYA</sequence>
<evidence type="ECO:0000255" key="1">
    <source>
        <dbReference type="HAMAP-Rule" id="MF_02002"/>
    </source>
</evidence>
<reference key="1">
    <citation type="journal article" date="2006" name="PLoS Genet.">
        <title>The complete genome sequence and comparative genome analysis of the high pathogenicity Yersinia enterocolitica strain 8081.</title>
        <authorList>
            <person name="Thomson N.R."/>
            <person name="Howard S."/>
            <person name="Wren B.W."/>
            <person name="Holden M.T.G."/>
            <person name="Crossman L."/>
            <person name="Challis G.L."/>
            <person name="Churcher C."/>
            <person name="Mungall K."/>
            <person name="Brooks K."/>
            <person name="Chillingworth T."/>
            <person name="Feltwell T."/>
            <person name="Abdellah Z."/>
            <person name="Hauser H."/>
            <person name="Jagels K."/>
            <person name="Maddison M."/>
            <person name="Moule S."/>
            <person name="Sanders M."/>
            <person name="Whitehead S."/>
            <person name="Quail M.A."/>
            <person name="Dougan G."/>
            <person name="Parkhill J."/>
            <person name="Prentice M.B."/>
        </authorList>
    </citation>
    <scope>NUCLEOTIDE SEQUENCE [LARGE SCALE GENOMIC DNA]</scope>
    <source>
        <strain>NCTC 13174 / 8081</strain>
    </source>
</reference>
<keyword id="KW-0030">Aminoacyl-tRNA synthetase</keyword>
<keyword id="KW-0067">ATP-binding</keyword>
<keyword id="KW-0963">Cytoplasm</keyword>
<keyword id="KW-0436">Ligase</keyword>
<keyword id="KW-0479">Metal-binding</keyword>
<keyword id="KW-0547">Nucleotide-binding</keyword>
<keyword id="KW-0648">Protein biosynthesis</keyword>
<keyword id="KW-0862">Zinc</keyword>
<proteinExistence type="inferred from homology"/>
<comment type="function">
    <text evidence="1">Catalyzes the attachment of isoleucine to tRNA(Ile). As IleRS can inadvertently accommodate and process structurally similar amino acids such as valine, to avoid such errors it has two additional distinct tRNA(Ile)-dependent editing activities. One activity is designated as 'pretransfer' editing and involves the hydrolysis of activated Val-AMP. The other activity is designated 'posttransfer' editing and involves deacylation of mischarged Val-tRNA(Ile).</text>
</comment>
<comment type="catalytic activity">
    <reaction evidence="1">
        <text>tRNA(Ile) + L-isoleucine + ATP = L-isoleucyl-tRNA(Ile) + AMP + diphosphate</text>
        <dbReference type="Rhea" id="RHEA:11060"/>
        <dbReference type="Rhea" id="RHEA-COMP:9666"/>
        <dbReference type="Rhea" id="RHEA-COMP:9695"/>
        <dbReference type="ChEBI" id="CHEBI:30616"/>
        <dbReference type="ChEBI" id="CHEBI:33019"/>
        <dbReference type="ChEBI" id="CHEBI:58045"/>
        <dbReference type="ChEBI" id="CHEBI:78442"/>
        <dbReference type="ChEBI" id="CHEBI:78528"/>
        <dbReference type="ChEBI" id="CHEBI:456215"/>
        <dbReference type="EC" id="6.1.1.5"/>
    </reaction>
</comment>
<comment type="cofactor">
    <cofactor evidence="1">
        <name>Zn(2+)</name>
        <dbReference type="ChEBI" id="CHEBI:29105"/>
    </cofactor>
    <text evidence="1">Binds 1 zinc ion per subunit.</text>
</comment>
<comment type="subunit">
    <text evidence="1">Monomer.</text>
</comment>
<comment type="subcellular location">
    <subcellularLocation>
        <location evidence="1">Cytoplasm</location>
    </subcellularLocation>
</comment>
<comment type="domain">
    <text evidence="1">IleRS has two distinct active sites: one for aminoacylation and one for editing. The misactivated valine is translocated from the active site to the editing site, which sterically excludes the correctly activated isoleucine. The single editing site contains two valyl binding pockets, one specific for each substrate (Val-AMP or Val-tRNA(Ile)).</text>
</comment>
<comment type="similarity">
    <text evidence="1">Belongs to the class-I aminoacyl-tRNA synthetase family. IleS type 1 subfamily.</text>
</comment>
<feature type="chain" id="PRO_1000022143" description="Isoleucine--tRNA ligase">
    <location>
        <begin position="1"/>
        <end position="938"/>
    </location>
</feature>
<feature type="short sequence motif" description="'HIGH' region">
    <location>
        <begin position="58"/>
        <end position="68"/>
    </location>
</feature>
<feature type="short sequence motif" description="'KMSKS' region">
    <location>
        <begin position="602"/>
        <end position="606"/>
    </location>
</feature>
<feature type="binding site" evidence="1">
    <location>
        <position position="561"/>
    </location>
    <ligand>
        <name>L-isoleucyl-5'-AMP</name>
        <dbReference type="ChEBI" id="CHEBI:178002"/>
    </ligand>
</feature>
<feature type="binding site" evidence="1">
    <location>
        <position position="605"/>
    </location>
    <ligand>
        <name>ATP</name>
        <dbReference type="ChEBI" id="CHEBI:30616"/>
    </ligand>
</feature>
<feature type="binding site" evidence="1">
    <location>
        <position position="901"/>
    </location>
    <ligand>
        <name>Zn(2+)</name>
        <dbReference type="ChEBI" id="CHEBI:29105"/>
    </ligand>
</feature>
<feature type="binding site" evidence="1">
    <location>
        <position position="904"/>
    </location>
    <ligand>
        <name>Zn(2+)</name>
        <dbReference type="ChEBI" id="CHEBI:29105"/>
    </ligand>
</feature>
<feature type="binding site" evidence="1">
    <location>
        <position position="921"/>
    </location>
    <ligand>
        <name>Zn(2+)</name>
        <dbReference type="ChEBI" id="CHEBI:29105"/>
    </ligand>
</feature>
<feature type="binding site" evidence="1">
    <location>
        <position position="924"/>
    </location>
    <ligand>
        <name>Zn(2+)</name>
        <dbReference type="ChEBI" id="CHEBI:29105"/>
    </ligand>
</feature>